<evidence type="ECO:0000255" key="1">
    <source>
        <dbReference type="PROSITE-ProRule" id="PRU00335"/>
    </source>
</evidence>
<accession>Q7VEN0</accession>
<accession>A0A1R3Y1F7</accession>
<accession>X2BKJ2</accession>
<feature type="chain" id="PRO_0000070669" description="Uncharacterized HTH-type transcriptional regulator Mb2274c">
    <location>
        <begin position="1"/>
        <end position="189"/>
    </location>
</feature>
<feature type="domain" description="HTH tetR-type" evidence="1">
    <location>
        <begin position="9"/>
        <end position="69"/>
    </location>
</feature>
<feature type="DNA-binding region" description="H-T-H motif" evidence="1">
    <location>
        <begin position="32"/>
        <end position="51"/>
    </location>
</feature>
<protein>
    <recommendedName>
        <fullName>Uncharacterized HTH-type transcriptional regulator Mb2274c</fullName>
    </recommendedName>
</protein>
<proteinExistence type="predicted"/>
<dbReference type="EMBL" id="LT708304">
    <property type="protein sequence ID" value="SIU00885.1"/>
    <property type="molecule type" value="Genomic_DNA"/>
</dbReference>
<dbReference type="RefSeq" id="NP_855923.1">
    <property type="nucleotide sequence ID" value="NC_002945.3"/>
</dbReference>
<dbReference type="RefSeq" id="WP_010950681.1">
    <property type="nucleotide sequence ID" value="NC_002945.4"/>
</dbReference>
<dbReference type="SMR" id="Q7VEN0"/>
<dbReference type="KEGG" id="mbo:BQ2027_MB2274C"/>
<dbReference type="PATRIC" id="fig|233413.5.peg.2495"/>
<dbReference type="Proteomes" id="UP000001419">
    <property type="component" value="Chromosome"/>
</dbReference>
<dbReference type="GO" id="GO:0003700">
    <property type="term" value="F:DNA-binding transcription factor activity"/>
    <property type="evidence" value="ECO:0007669"/>
    <property type="project" value="TreeGrafter"/>
</dbReference>
<dbReference type="GO" id="GO:0000976">
    <property type="term" value="F:transcription cis-regulatory region binding"/>
    <property type="evidence" value="ECO:0007669"/>
    <property type="project" value="TreeGrafter"/>
</dbReference>
<dbReference type="Gene3D" id="1.10.357.10">
    <property type="entry name" value="Tetracycline Repressor, domain 2"/>
    <property type="match status" value="1"/>
</dbReference>
<dbReference type="InterPro" id="IPR023772">
    <property type="entry name" value="DNA-bd_HTH_TetR-type_CS"/>
</dbReference>
<dbReference type="InterPro" id="IPR009057">
    <property type="entry name" value="Homeodomain-like_sf"/>
</dbReference>
<dbReference type="InterPro" id="IPR050109">
    <property type="entry name" value="HTH-type_TetR-like_transc_reg"/>
</dbReference>
<dbReference type="InterPro" id="IPR001647">
    <property type="entry name" value="HTH_TetR"/>
</dbReference>
<dbReference type="InterPro" id="IPR036271">
    <property type="entry name" value="Tet_transcr_reg_TetR-rel_C_sf"/>
</dbReference>
<dbReference type="PANTHER" id="PTHR30055">
    <property type="entry name" value="HTH-TYPE TRANSCRIPTIONAL REGULATOR RUTR"/>
    <property type="match status" value="1"/>
</dbReference>
<dbReference type="PANTHER" id="PTHR30055:SF238">
    <property type="entry name" value="MYCOFACTOCIN BIOSYNTHESIS TRANSCRIPTIONAL REGULATOR MFTR-RELATED"/>
    <property type="match status" value="1"/>
</dbReference>
<dbReference type="Pfam" id="PF00440">
    <property type="entry name" value="TetR_N"/>
    <property type="match status" value="1"/>
</dbReference>
<dbReference type="PRINTS" id="PR00455">
    <property type="entry name" value="HTHTETR"/>
</dbReference>
<dbReference type="SUPFAM" id="SSF46689">
    <property type="entry name" value="Homeodomain-like"/>
    <property type="match status" value="1"/>
</dbReference>
<dbReference type="SUPFAM" id="SSF48498">
    <property type="entry name" value="Tetracyclin repressor-like, C-terminal domain"/>
    <property type="match status" value="1"/>
</dbReference>
<dbReference type="PROSITE" id="PS01081">
    <property type="entry name" value="HTH_TETR_1"/>
    <property type="match status" value="1"/>
</dbReference>
<dbReference type="PROSITE" id="PS50977">
    <property type="entry name" value="HTH_TETR_2"/>
    <property type="match status" value="1"/>
</dbReference>
<name>Y2274_MYCBO</name>
<sequence length="189" mass="20450">MLSMSNDRADTGGRILRAAASCVVDYGVDRVTLAEIARRAGVSRPTVYRRWPDTRSIMASMLTSHIAAVLREVPLDGDDREALVKQIVAVADRLRGDDLIMSVMHSELARVYITERLGTSQQVLIEGLAARLTVAQRSGSVRSGDARRLATMVLLIAQSTIQSADIVDSILDSAALATELTHALNGYLC</sequence>
<organism>
    <name type="scientific">Mycobacterium bovis (strain ATCC BAA-935 / AF2122/97)</name>
    <dbReference type="NCBI Taxonomy" id="233413"/>
    <lineage>
        <taxon>Bacteria</taxon>
        <taxon>Bacillati</taxon>
        <taxon>Actinomycetota</taxon>
        <taxon>Actinomycetes</taxon>
        <taxon>Mycobacteriales</taxon>
        <taxon>Mycobacteriaceae</taxon>
        <taxon>Mycobacterium</taxon>
        <taxon>Mycobacterium tuberculosis complex</taxon>
    </lineage>
</organism>
<reference key="1">
    <citation type="journal article" date="2003" name="Proc. Natl. Acad. Sci. U.S.A.">
        <title>The complete genome sequence of Mycobacterium bovis.</title>
        <authorList>
            <person name="Garnier T."/>
            <person name="Eiglmeier K."/>
            <person name="Camus J.-C."/>
            <person name="Medina N."/>
            <person name="Mansoor H."/>
            <person name="Pryor M."/>
            <person name="Duthoy S."/>
            <person name="Grondin S."/>
            <person name="Lacroix C."/>
            <person name="Monsempe C."/>
            <person name="Simon S."/>
            <person name="Harris B."/>
            <person name="Atkin R."/>
            <person name="Doggett J."/>
            <person name="Mayes R."/>
            <person name="Keating L."/>
            <person name="Wheeler P.R."/>
            <person name="Parkhill J."/>
            <person name="Barrell B.G."/>
            <person name="Cole S.T."/>
            <person name="Gordon S.V."/>
            <person name="Hewinson R.G."/>
        </authorList>
    </citation>
    <scope>NUCLEOTIDE SEQUENCE [LARGE SCALE GENOMIC DNA]</scope>
    <source>
        <strain>ATCC BAA-935 / AF2122/97</strain>
    </source>
</reference>
<reference key="2">
    <citation type="journal article" date="2017" name="Genome Announc.">
        <title>Updated reference genome sequence and annotation of Mycobacterium bovis AF2122/97.</title>
        <authorList>
            <person name="Malone K.M."/>
            <person name="Farrell D."/>
            <person name="Stuber T.P."/>
            <person name="Schubert O.T."/>
            <person name="Aebersold R."/>
            <person name="Robbe-Austerman S."/>
            <person name="Gordon S.V."/>
        </authorList>
    </citation>
    <scope>NUCLEOTIDE SEQUENCE [LARGE SCALE GENOMIC DNA]</scope>
    <scope>GENOME REANNOTATION</scope>
    <source>
        <strain>ATCC BAA-935 / AF2122/97</strain>
    </source>
</reference>
<gene>
    <name type="ordered locus">BQ2027_MB2274C</name>
</gene>
<keyword id="KW-0238">DNA-binding</keyword>
<keyword id="KW-1185">Reference proteome</keyword>
<keyword id="KW-0804">Transcription</keyword>
<keyword id="KW-0805">Transcription regulation</keyword>